<proteinExistence type="inferred from homology"/>
<sequence length="255" mass="26809">MRHPLVMGNWKLNGSTHMVNELITGLRQELSSVTGCDVAIAPPALYLSQAKQALAGSRIALGAQDVDVNLSGAFTGETSATMLKDIGAEYIIIGHSERRTYHQESDEFIAKKFAILKQQGLIPVLCIGETEQENEAGQTESVCARQIDAVLNTLGVAAFQGAVIAYEPVWAIGTGKSATPAQAQAVHKFIRDHIAQKDAAIAQQIIIQYGGSVNADNAAELFSQPDIDGALVGGASLKANAFAVIVKAAAAAKKA</sequence>
<comment type="function">
    <text evidence="1">Involved in the gluconeogenesis. Catalyzes stereospecifically the conversion of dihydroxyacetone phosphate (DHAP) to D-glyceraldehyde-3-phosphate (G3P).</text>
</comment>
<comment type="catalytic activity">
    <reaction evidence="1">
        <text>D-glyceraldehyde 3-phosphate = dihydroxyacetone phosphate</text>
        <dbReference type="Rhea" id="RHEA:18585"/>
        <dbReference type="ChEBI" id="CHEBI:57642"/>
        <dbReference type="ChEBI" id="CHEBI:59776"/>
        <dbReference type="EC" id="5.3.1.1"/>
    </reaction>
</comment>
<comment type="pathway">
    <text evidence="1">Carbohydrate biosynthesis; gluconeogenesis.</text>
</comment>
<comment type="pathway">
    <text evidence="1">Carbohydrate degradation; glycolysis; D-glyceraldehyde 3-phosphate from glycerone phosphate: step 1/1.</text>
</comment>
<comment type="subunit">
    <text evidence="1">Homodimer.</text>
</comment>
<comment type="subcellular location">
    <subcellularLocation>
        <location evidence="1">Cytoplasm</location>
    </subcellularLocation>
</comment>
<comment type="similarity">
    <text evidence="1">Belongs to the triosephosphate isomerase family.</text>
</comment>
<reference key="1">
    <citation type="journal article" date="2003" name="Nat. Biotechnol.">
        <title>The genome sequence of the entomopathogenic bacterium Photorhabdus luminescens.</title>
        <authorList>
            <person name="Duchaud E."/>
            <person name="Rusniok C."/>
            <person name="Frangeul L."/>
            <person name="Buchrieser C."/>
            <person name="Givaudan A."/>
            <person name="Taourit S."/>
            <person name="Bocs S."/>
            <person name="Boursaux-Eude C."/>
            <person name="Chandler M."/>
            <person name="Charles J.-F."/>
            <person name="Dassa E."/>
            <person name="Derose R."/>
            <person name="Derzelle S."/>
            <person name="Freyssinet G."/>
            <person name="Gaudriault S."/>
            <person name="Medigue C."/>
            <person name="Lanois A."/>
            <person name="Powell K."/>
            <person name="Siguier P."/>
            <person name="Vincent R."/>
            <person name="Wingate V."/>
            <person name="Zouine M."/>
            <person name="Glaser P."/>
            <person name="Boemare N."/>
            <person name="Danchin A."/>
            <person name="Kunst F."/>
        </authorList>
    </citation>
    <scope>NUCLEOTIDE SEQUENCE [LARGE SCALE GENOMIC DNA]</scope>
    <source>
        <strain>DSM 15139 / CIP 105565 / TT01</strain>
    </source>
</reference>
<feature type="chain" id="PRO_0000090263" description="Triosephosphate isomerase">
    <location>
        <begin position="1"/>
        <end position="255"/>
    </location>
</feature>
<feature type="active site" description="Electrophile" evidence="1">
    <location>
        <position position="95"/>
    </location>
</feature>
<feature type="active site" description="Proton acceptor" evidence="1">
    <location>
        <position position="167"/>
    </location>
</feature>
<feature type="binding site" evidence="1">
    <location>
        <begin position="9"/>
        <end position="11"/>
    </location>
    <ligand>
        <name>substrate</name>
    </ligand>
</feature>
<feature type="binding site" evidence="1">
    <location>
        <position position="173"/>
    </location>
    <ligand>
        <name>substrate</name>
    </ligand>
</feature>
<feature type="binding site" evidence="1">
    <location>
        <position position="212"/>
    </location>
    <ligand>
        <name>substrate</name>
    </ligand>
</feature>
<feature type="binding site" evidence="1">
    <location>
        <begin position="233"/>
        <end position="234"/>
    </location>
    <ligand>
        <name>substrate</name>
    </ligand>
</feature>
<name>TPIS_PHOLL</name>
<organism>
    <name type="scientific">Photorhabdus laumondii subsp. laumondii (strain DSM 15139 / CIP 105565 / TT01)</name>
    <name type="common">Photorhabdus luminescens subsp. laumondii</name>
    <dbReference type="NCBI Taxonomy" id="243265"/>
    <lineage>
        <taxon>Bacteria</taxon>
        <taxon>Pseudomonadati</taxon>
        <taxon>Pseudomonadota</taxon>
        <taxon>Gammaproteobacteria</taxon>
        <taxon>Enterobacterales</taxon>
        <taxon>Morganellaceae</taxon>
        <taxon>Photorhabdus</taxon>
    </lineage>
</organism>
<gene>
    <name evidence="1" type="primary">tpiA</name>
    <name type="ordered locus">plu4772</name>
</gene>
<keyword id="KW-0963">Cytoplasm</keyword>
<keyword id="KW-0312">Gluconeogenesis</keyword>
<keyword id="KW-0324">Glycolysis</keyword>
<keyword id="KW-0413">Isomerase</keyword>
<keyword id="KW-1185">Reference proteome</keyword>
<evidence type="ECO:0000255" key="1">
    <source>
        <dbReference type="HAMAP-Rule" id="MF_00147"/>
    </source>
</evidence>
<accession>Q7MYB3</accession>
<protein>
    <recommendedName>
        <fullName evidence="1">Triosephosphate isomerase</fullName>
        <shortName evidence="1">TIM</shortName>
        <shortName evidence="1">TPI</shortName>
        <ecNumber evidence="1">5.3.1.1</ecNumber>
    </recommendedName>
    <alternativeName>
        <fullName evidence="1">Triose-phosphate isomerase</fullName>
    </alternativeName>
</protein>
<dbReference type="EC" id="5.3.1.1" evidence="1"/>
<dbReference type="EMBL" id="BX571874">
    <property type="protein sequence ID" value="CAE17144.1"/>
    <property type="molecule type" value="Genomic_DNA"/>
</dbReference>
<dbReference type="RefSeq" id="WP_011148837.1">
    <property type="nucleotide sequence ID" value="NC_005126.1"/>
</dbReference>
<dbReference type="SMR" id="Q7MYB3"/>
<dbReference type="STRING" id="243265.plu4772"/>
<dbReference type="GeneID" id="48851005"/>
<dbReference type="KEGG" id="plu:plu4772"/>
<dbReference type="eggNOG" id="COG0149">
    <property type="taxonomic scope" value="Bacteria"/>
</dbReference>
<dbReference type="HOGENOM" id="CLU_024251_2_1_6"/>
<dbReference type="OrthoDB" id="9809429at2"/>
<dbReference type="UniPathway" id="UPA00109">
    <property type="reaction ID" value="UER00189"/>
</dbReference>
<dbReference type="UniPathway" id="UPA00138"/>
<dbReference type="Proteomes" id="UP000002514">
    <property type="component" value="Chromosome"/>
</dbReference>
<dbReference type="GO" id="GO:0005829">
    <property type="term" value="C:cytosol"/>
    <property type="evidence" value="ECO:0007669"/>
    <property type="project" value="TreeGrafter"/>
</dbReference>
<dbReference type="GO" id="GO:0004807">
    <property type="term" value="F:triose-phosphate isomerase activity"/>
    <property type="evidence" value="ECO:0007669"/>
    <property type="project" value="UniProtKB-UniRule"/>
</dbReference>
<dbReference type="GO" id="GO:0006094">
    <property type="term" value="P:gluconeogenesis"/>
    <property type="evidence" value="ECO:0007669"/>
    <property type="project" value="UniProtKB-UniRule"/>
</dbReference>
<dbReference type="GO" id="GO:0046166">
    <property type="term" value="P:glyceraldehyde-3-phosphate biosynthetic process"/>
    <property type="evidence" value="ECO:0007669"/>
    <property type="project" value="TreeGrafter"/>
</dbReference>
<dbReference type="GO" id="GO:0019563">
    <property type="term" value="P:glycerol catabolic process"/>
    <property type="evidence" value="ECO:0007669"/>
    <property type="project" value="TreeGrafter"/>
</dbReference>
<dbReference type="GO" id="GO:0006096">
    <property type="term" value="P:glycolytic process"/>
    <property type="evidence" value="ECO:0007669"/>
    <property type="project" value="UniProtKB-UniRule"/>
</dbReference>
<dbReference type="CDD" id="cd00311">
    <property type="entry name" value="TIM"/>
    <property type="match status" value="1"/>
</dbReference>
<dbReference type="FunFam" id="3.20.20.70:FF:000020">
    <property type="entry name" value="Triosephosphate isomerase"/>
    <property type="match status" value="1"/>
</dbReference>
<dbReference type="Gene3D" id="3.20.20.70">
    <property type="entry name" value="Aldolase class I"/>
    <property type="match status" value="1"/>
</dbReference>
<dbReference type="HAMAP" id="MF_00147_B">
    <property type="entry name" value="TIM_B"/>
    <property type="match status" value="1"/>
</dbReference>
<dbReference type="InterPro" id="IPR013785">
    <property type="entry name" value="Aldolase_TIM"/>
</dbReference>
<dbReference type="InterPro" id="IPR035990">
    <property type="entry name" value="TIM_sf"/>
</dbReference>
<dbReference type="InterPro" id="IPR022896">
    <property type="entry name" value="TrioseP_Isoase_bac/euk"/>
</dbReference>
<dbReference type="InterPro" id="IPR000652">
    <property type="entry name" value="Triosephosphate_isomerase"/>
</dbReference>
<dbReference type="InterPro" id="IPR020861">
    <property type="entry name" value="Triosephosphate_isomerase_AS"/>
</dbReference>
<dbReference type="NCBIfam" id="TIGR00419">
    <property type="entry name" value="tim"/>
    <property type="match status" value="1"/>
</dbReference>
<dbReference type="PANTHER" id="PTHR21139">
    <property type="entry name" value="TRIOSEPHOSPHATE ISOMERASE"/>
    <property type="match status" value="1"/>
</dbReference>
<dbReference type="PANTHER" id="PTHR21139:SF42">
    <property type="entry name" value="TRIOSEPHOSPHATE ISOMERASE"/>
    <property type="match status" value="1"/>
</dbReference>
<dbReference type="Pfam" id="PF00121">
    <property type="entry name" value="TIM"/>
    <property type="match status" value="1"/>
</dbReference>
<dbReference type="SUPFAM" id="SSF51351">
    <property type="entry name" value="Triosephosphate isomerase (TIM)"/>
    <property type="match status" value="1"/>
</dbReference>
<dbReference type="PROSITE" id="PS00171">
    <property type="entry name" value="TIM_1"/>
    <property type="match status" value="1"/>
</dbReference>
<dbReference type="PROSITE" id="PS51440">
    <property type="entry name" value="TIM_2"/>
    <property type="match status" value="1"/>
</dbReference>